<reference key="1">
    <citation type="journal article" date="2009" name="Appl. Environ. Microbiol.">
        <title>Three genomes from the phylum Acidobacteria provide insight into the lifestyles of these microorganisms in soils.</title>
        <authorList>
            <person name="Ward N.L."/>
            <person name="Challacombe J.F."/>
            <person name="Janssen P.H."/>
            <person name="Henrissat B."/>
            <person name="Coutinho P.M."/>
            <person name="Wu M."/>
            <person name="Xie G."/>
            <person name="Haft D.H."/>
            <person name="Sait M."/>
            <person name="Badger J."/>
            <person name="Barabote R.D."/>
            <person name="Bradley B."/>
            <person name="Brettin T.S."/>
            <person name="Brinkac L.M."/>
            <person name="Bruce D."/>
            <person name="Creasy T."/>
            <person name="Daugherty S.C."/>
            <person name="Davidsen T.M."/>
            <person name="DeBoy R.T."/>
            <person name="Detter J.C."/>
            <person name="Dodson R.J."/>
            <person name="Durkin A.S."/>
            <person name="Ganapathy A."/>
            <person name="Gwinn-Giglio M."/>
            <person name="Han C.S."/>
            <person name="Khouri H."/>
            <person name="Kiss H."/>
            <person name="Kothari S.P."/>
            <person name="Madupu R."/>
            <person name="Nelson K.E."/>
            <person name="Nelson W.C."/>
            <person name="Paulsen I."/>
            <person name="Penn K."/>
            <person name="Ren Q."/>
            <person name="Rosovitz M.J."/>
            <person name="Selengut J.D."/>
            <person name="Shrivastava S."/>
            <person name="Sullivan S.A."/>
            <person name="Tapia R."/>
            <person name="Thompson L.S."/>
            <person name="Watkins K.L."/>
            <person name="Yang Q."/>
            <person name="Yu C."/>
            <person name="Zafar N."/>
            <person name="Zhou L."/>
            <person name="Kuske C.R."/>
        </authorList>
    </citation>
    <scope>NUCLEOTIDE SEQUENCE [LARGE SCALE GENOMIC DNA]</scope>
    <source>
        <strain>ATCC 51196 / DSM 11244 / BCRC 80197 / JCM 7670 / NBRC 15755 / NCIMB 13165 / 161</strain>
    </source>
</reference>
<organism>
    <name type="scientific">Acidobacterium capsulatum (strain ATCC 51196 / DSM 11244 / BCRC 80197 / JCM 7670 / NBRC 15755 / NCIMB 13165 / 161)</name>
    <dbReference type="NCBI Taxonomy" id="240015"/>
    <lineage>
        <taxon>Bacteria</taxon>
        <taxon>Pseudomonadati</taxon>
        <taxon>Acidobacteriota</taxon>
        <taxon>Terriglobia</taxon>
        <taxon>Terriglobales</taxon>
        <taxon>Acidobacteriaceae</taxon>
        <taxon>Acidobacterium</taxon>
    </lineage>
</organism>
<keyword id="KW-0067">ATP-binding</keyword>
<keyword id="KW-0315">Glutamine amidotransferase</keyword>
<keyword id="KW-0436">Ligase</keyword>
<keyword id="KW-0460">Magnesium</keyword>
<keyword id="KW-0479">Metal-binding</keyword>
<keyword id="KW-0547">Nucleotide-binding</keyword>
<keyword id="KW-0665">Pyrimidine biosynthesis</keyword>
<keyword id="KW-1185">Reference proteome</keyword>
<feature type="chain" id="PRO_1000164922" description="CTP synthase">
    <location>
        <begin position="1"/>
        <end position="549"/>
    </location>
</feature>
<feature type="domain" description="Glutamine amidotransferase type-1" evidence="1">
    <location>
        <begin position="291"/>
        <end position="533"/>
    </location>
</feature>
<feature type="region of interest" description="Amidoligase domain" evidence="1">
    <location>
        <begin position="1"/>
        <end position="266"/>
    </location>
</feature>
<feature type="active site" description="Nucleophile; for glutamine hydrolysis" evidence="1">
    <location>
        <position position="380"/>
    </location>
</feature>
<feature type="active site" evidence="1">
    <location>
        <position position="506"/>
    </location>
</feature>
<feature type="active site" evidence="1">
    <location>
        <position position="508"/>
    </location>
</feature>
<feature type="binding site" evidence="1">
    <location>
        <position position="14"/>
    </location>
    <ligand>
        <name>CTP</name>
        <dbReference type="ChEBI" id="CHEBI:37563"/>
        <note>allosteric inhibitor</note>
    </ligand>
</feature>
<feature type="binding site" evidence="1">
    <location>
        <position position="14"/>
    </location>
    <ligand>
        <name>UTP</name>
        <dbReference type="ChEBI" id="CHEBI:46398"/>
    </ligand>
</feature>
<feature type="binding site" evidence="1">
    <location>
        <begin position="15"/>
        <end position="20"/>
    </location>
    <ligand>
        <name>ATP</name>
        <dbReference type="ChEBI" id="CHEBI:30616"/>
    </ligand>
</feature>
<feature type="binding site" evidence="1">
    <location>
        <position position="72"/>
    </location>
    <ligand>
        <name>ATP</name>
        <dbReference type="ChEBI" id="CHEBI:30616"/>
    </ligand>
</feature>
<feature type="binding site" evidence="1">
    <location>
        <position position="72"/>
    </location>
    <ligand>
        <name>Mg(2+)</name>
        <dbReference type="ChEBI" id="CHEBI:18420"/>
    </ligand>
</feature>
<feature type="binding site" evidence="1">
    <location>
        <position position="140"/>
    </location>
    <ligand>
        <name>Mg(2+)</name>
        <dbReference type="ChEBI" id="CHEBI:18420"/>
    </ligand>
</feature>
<feature type="binding site" evidence="1">
    <location>
        <begin position="147"/>
        <end position="149"/>
    </location>
    <ligand>
        <name>CTP</name>
        <dbReference type="ChEBI" id="CHEBI:37563"/>
        <note>allosteric inhibitor</note>
    </ligand>
</feature>
<feature type="binding site" evidence="1">
    <location>
        <begin position="187"/>
        <end position="192"/>
    </location>
    <ligand>
        <name>CTP</name>
        <dbReference type="ChEBI" id="CHEBI:37563"/>
        <note>allosteric inhibitor</note>
    </ligand>
</feature>
<feature type="binding site" evidence="1">
    <location>
        <begin position="187"/>
        <end position="192"/>
    </location>
    <ligand>
        <name>UTP</name>
        <dbReference type="ChEBI" id="CHEBI:46398"/>
    </ligand>
</feature>
<feature type="binding site" evidence="1">
    <location>
        <position position="223"/>
    </location>
    <ligand>
        <name>CTP</name>
        <dbReference type="ChEBI" id="CHEBI:37563"/>
        <note>allosteric inhibitor</note>
    </ligand>
</feature>
<feature type="binding site" evidence="1">
    <location>
        <position position="223"/>
    </location>
    <ligand>
        <name>UTP</name>
        <dbReference type="ChEBI" id="CHEBI:46398"/>
    </ligand>
</feature>
<feature type="binding site" evidence="1">
    <location>
        <begin position="239"/>
        <end position="241"/>
    </location>
    <ligand>
        <name>ATP</name>
        <dbReference type="ChEBI" id="CHEBI:30616"/>
    </ligand>
</feature>
<feature type="binding site" evidence="1">
    <location>
        <position position="353"/>
    </location>
    <ligand>
        <name>L-glutamine</name>
        <dbReference type="ChEBI" id="CHEBI:58359"/>
    </ligand>
</feature>
<feature type="binding site" evidence="1">
    <location>
        <begin position="381"/>
        <end position="384"/>
    </location>
    <ligand>
        <name>L-glutamine</name>
        <dbReference type="ChEBI" id="CHEBI:58359"/>
    </ligand>
</feature>
<feature type="binding site" evidence="1">
    <location>
        <position position="404"/>
    </location>
    <ligand>
        <name>L-glutamine</name>
        <dbReference type="ChEBI" id="CHEBI:58359"/>
    </ligand>
</feature>
<feature type="binding site" evidence="1">
    <location>
        <position position="461"/>
    </location>
    <ligand>
        <name>L-glutamine</name>
        <dbReference type="ChEBI" id="CHEBI:58359"/>
    </ligand>
</feature>
<name>PYRG_ACIC5</name>
<dbReference type="EC" id="6.3.4.2" evidence="1"/>
<dbReference type="EMBL" id="CP001472">
    <property type="protein sequence ID" value="ACO34176.1"/>
    <property type="molecule type" value="Genomic_DNA"/>
</dbReference>
<dbReference type="RefSeq" id="WP_015897537.1">
    <property type="nucleotide sequence ID" value="NC_012483.1"/>
</dbReference>
<dbReference type="SMR" id="C1F1E7"/>
<dbReference type="FunCoup" id="C1F1E7">
    <property type="interactions" value="450"/>
</dbReference>
<dbReference type="STRING" id="240015.ACP_2453"/>
<dbReference type="MEROPS" id="C26.964"/>
<dbReference type="KEGG" id="aca:ACP_2453"/>
<dbReference type="eggNOG" id="COG0504">
    <property type="taxonomic scope" value="Bacteria"/>
</dbReference>
<dbReference type="HOGENOM" id="CLU_011675_5_0_0"/>
<dbReference type="InParanoid" id="C1F1E7"/>
<dbReference type="OrthoDB" id="9801107at2"/>
<dbReference type="UniPathway" id="UPA00159">
    <property type="reaction ID" value="UER00277"/>
</dbReference>
<dbReference type="Proteomes" id="UP000002207">
    <property type="component" value="Chromosome"/>
</dbReference>
<dbReference type="GO" id="GO:0005829">
    <property type="term" value="C:cytosol"/>
    <property type="evidence" value="ECO:0007669"/>
    <property type="project" value="TreeGrafter"/>
</dbReference>
<dbReference type="GO" id="GO:0005524">
    <property type="term" value="F:ATP binding"/>
    <property type="evidence" value="ECO:0007669"/>
    <property type="project" value="UniProtKB-KW"/>
</dbReference>
<dbReference type="GO" id="GO:0003883">
    <property type="term" value="F:CTP synthase activity"/>
    <property type="evidence" value="ECO:0007669"/>
    <property type="project" value="UniProtKB-UniRule"/>
</dbReference>
<dbReference type="GO" id="GO:0004359">
    <property type="term" value="F:glutaminase activity"/>
    <property type="evidence" value="ECO:0007669"/>
    <property type="project" value="RHEA"/>
</dbReference>
<dbReference type="GO" id="GO:0042802">
    <property type="term" value="F:identical protein binding"/>
    <property type="evidence" value="ECO:0007669"/>
    <property type="project" value="TreeGrafter"/>
</dbReference>
<dbReference type="GO" id="GO:0046872">
    <property type="term" value="F:metal ion binding"/>
    <property type="evidence" value="ECO:0007669"/>
    <property type="project" value="UniProtKB-KW"/>
</dbReference>
<dbReference type="GO" id="GO:0044210">
    <property type="term" value="P:'de novo' CTP biosynthetic process"/>
    <property type="evidence" value="ECO:0007669"/>
    <property type="project" value="UniProtKB-UniRule"/>
</dbReference>
<dbReference type="GO" id="GO:0019856">
    <property type="term" value="P:pyrimidine nucleobase biosynthetic process"/>
    <property type="evidence" value="ECO:0007669"/>
    <property type="project" value="TreeGrafter"/>
</dbReference>
<dbReference type="CDD" id="cd03113">
    <property type="entry name" value="CTPS_N"/>
    <property type="match status" value="1"/>
</dbReference>
<dbReference type="CDD" id="cd01746">
    <property type="entry name" value="GATase1_CTP_Synthase"/>
    <property type="match status" value="1"/>
</dbReference>
<dbReference type="FunFam" id="3.40.50.300:FF:000009">
    <property type="entry name" value="CTP synthase"/>
    <property type="match status" value="1"/>
</dbReference>
<dbReference type="FunFam" id="3.40.50.880:FF:000002">
    <property type="entry name" value="CTP synthase"/>
    <property type="match status" value="1"/>
</dbReference>
<dbReference type="Gene3D" id="3.40.50.880">
    <property type="match status" value="1"/>
</dbReference>
<dbReference type="Gene3D" id="3.40.50.300">
    <property type="entry name" value="P-loop containing nucleotide triphosphate hydrolases"/>
    <property type="match status" value="1"/>
</dbReference>
<dbReference type="HAMAP" id="MF_01227">
    <property type="entry name" value="PyrG"/>
    <property type="match status" value="1"/>
</dbReference>
<dbReference type="InterPro" id="IPR029062">
    <property type="entry name" value="Class_I_gatase-like"/>
</dbReference>
<dbReference type="InterPro" id="IPR004468">
    <property type="entry name" value="CTP_synthase"/>
</dbReference>
<dbReference type="InterPro" id="IPR017456">
    <property type="entry name" value="CTP_synthase_N"/>
</dbReference>
<dbReference type="InterPro" id="IPR017926">
    <property type="entry name" value="GATASE"/>
</dbReference>
<dbReference type="InterPro" id="IPR033828">
    <property type="entry name" value="GATase1_CTP_Synthase"/>
</dbReference>
<dbReference type="InterPro" id="IPR027417">
    <property type="entry name" value="P-loop_NTPase"/>
</dbReference>
<dbReference type="NCBIfam" id="NF003792">
    <property type="entry name" value="PRK05380.1"/>
    <property type="match status" value="1"/>
</dbReference>
<dbReference type="NCBIfam" id="TIGR00337">
    <property type="entry name" value="PyrG"/>
    <property type="match status" value="1"/>
</dbReference>
<dbReference type="PANTHER" id="PTHR11550">
    <property type="entry name" value="CTP SYNTHASE"/>
    <property type="match status" value="1"/>
</dbReference>
<dbReference type="PANTHER" id="PTHR11550:SF0">
    <property type="entry name" value="CTP SYNTHASE-RELATED"/>
    <property type="match status" value="1"/>
</dbReference>
<dbReference type="Pfam" id="PF06418">
    <property type="entry name" value="CTP_synth_N"/>
    <property type="match status" value="1"/>
</dbReference>
<dbReference type="Pfam" id="PF00117">
    <property type="entry name" value="GATase"/>
    <property type="match status" value="1"/>
</dbReference>
<dbReference type="SUPFAM" id="SSF52317">
    <property type="entry name" value="Class I glutamine amidotransferase-like"/>
    <property type="match status" value="1"/>
</dbReference>
<dbReference type="SUPFAM" id="SSF52540">
    <property type="entry name" value="P-loop containing nucleoside triphosphate hydrolases"/>
    <property type="match status" value="1"/>
</dbReference>
<dbReference type="PROSITE" id="PS51273">
    <property type="entry name" value="GATASE_TYPE_1"/>
    <property type="match status" value="1"/>
</dbReference>
<protein>
    <recommendedName>
        <fullName evidence="1">CTP synthase</fullName>
        <ecNumber evidence="1">6.3.4.2</ecNumber>
    </recommendedName>
    <alternativeName>
        <fullName evidence="1">Cytidine 5'-triphosphate synthase</fullName>
    </alternativeName>
    <alternativeName>
        <fullName evidence="1">Cytidine triphosphate synthetase</fullName>
        <shortName evidence="1">CTP synthetase</shortName>
        <shortName evidence="1">CTPS</shortName>
    </alternativeName>
    <alternativeName>
        <fullName evidence="1">UTP--ammonia ligase</fullName>
    </alternativeName>
</protein>
<sequence>MSAKYIFVTGGVVSSLGKGLAAASIGCLLEARGLRVNLMKFDPYLNVDPGTMSPFQHGEVFVTDDGAETDLDLGHYERFTHARLTRDNNLTTGRIYEQIITKERRGDYLGKTVQVIPHVTNEIKNAMRKVAADGDVTIVEIGGTVGDIESLPFLEAIRQMRQELGRENTVFVHVTLVPWISAAQELKTKPTQHSVKEMLSIGIQPDILLCRTDRYLPHDIKSKIALFCNLEEKAVITAKDVDSIYEVPLVFAQEGVDKLALRYLHLDTREPDLSRWSALVERCYHPTGEVSIGIVGKYVEYEDSYKSLKEALVHGALAEGLKLRVTWIEAEGLEAPNYEQQLSGFDGILVPGGFGKRGVEGMLNAIRYARENKVPYFGICLGMQTACIEFARNVCGLQGANSSEFDPATPHRIIYKLRELTGVEEMGGTMRLGAWACVLQNGSLAADAYGKTEISERHRHRYEFNREYEAVLTGAGLRISGTTPDSTYVEIVEIPDHPYFLGCQFHPEFKSKPLEPHPLFHAFVKAAYQNHKPHTEATQPAAESAPIGK</sequence>
<evidence type="ECO:0000255" key="1">
    <source>
        <dbReference type="HAMAP-Rule" id="MF_01227"/>
    </source>
</evidence>
<proteinExistence type="inferred from homology"/>
<accession>C1F1E7</accession>
<gene>
    <name evidence="1" type="primary">pyrG</name>
    <name type="ordered locus">ACP_2453</name>
</gene>
<comment type="function">
    <text evidence="1">Catalyzes the ATP-dependent amination of UTP to CTP with either L-glutamine or ammonia as the source of nitrogen. Regulates intracellular CTP levels through interactions with the four ribonucleotide triphosphates.</text>
</comment>
<comment type="catalytic activity">
    <reaction evidence="1">
        <text>UTP + L-glutamine + ATP + H2O = CTP + L-glutamate + ADP + phosphate + 2 H(+)</text>
        <dbReference type="Rhea" id="RHEA:26426"/>
        <dbReference type="ChEBI" id="CHEBI:15377"/>
        <dbReference type="ChEBI" id="CHEBI:15378"/>
        <dbReference type="ChEBI" id="CHEBI:29985"/>
        <dbReference type="ChEBI" id="CHEBI:30616"/>
        <dbReference type="ChEBI" id="CHEBI:37563"/>
        <dbReference type="ChEBI" id="CHEBI:43474"/>
        <dbReference type="ChEBI" id="CHEBI:46398"/>
        <dbReference type="ChEBI" id="CHEBI:58359"/>
        <dbReference type="ChEBI" id="CHEBI:456216"/>
        <dbReference type="EC" id="6.3.4.2"/>
    </reaction>
</comment>
<comment type="catalytic activity">
    <reaction evidence="1">
        <text>L-glutamine + H2O = L-glutamate + NH4(+)</text>
        <dbReference type="Rhea" id="RHEA:15889"/>
        <dbReference type="ChEBI" id="CHEBI:15377"/>
        <dbReference type="ChEBI" id="CHEBI:28938"/>
        <dbReference type="ChEBI" id="CHEBI:29985"/>
        <dbReference type="ChEBI" id="CHEBI:58359"/>
    </reaction>
</comment>
<comment type="catalytic activity">
    <reaction evidence="1">
        <text>UTP + NH4(+) + ATP = CTP + ADP + phosphate + 2 H(+)</text>
        <dbReference type="Rhea" id="RHEA:16597"/>
        <dbReference type="ChEBI" id="CHEBI:15378"/>
        <dbReference type="ChEBI" id="CHEBI:28938"/>
        <dbReference type="ChEBI" id="CHEBI:30616"/>
        <dbReference type="ChEBI" id="CHEBI:37563"/>
        <dbReference type="ChEBI" id="CHEBI:43474"/>
        <dbReference type="ChEBI" id="CHEBI:46398"/>
        <dbReference type="ChEBI" id="CHEBI:456216"/>
    </reaction>
</comment>
<comment type="activity regulation">
    <text evidence="1">Allosterically activated by GTP, when glutamine is the substrate; GTP has no effect on the reaction when ammonia is the substrate. The allosteric effector GTP functions by stabilizing the protein conformation that binds the tetrahedral intermediate(s) formed during glutamine hydrolysis. Inhibited by the product CTP, via allosteric rather than competitive inhibition.</text>
</comment>
<comment type="pathway">
    <text evidence="1">Pyrimidine metabolism; CTP biosynthesis via de novo pathway; CTP from UDP: step 2/2.</text>
</comment>
<comment type="subunit">
    <text evidence="1">Homotetramer.</text>
</comment>
<comment type="miscellaneous">
    <text evidence="1">CTPSs have evolved a hybrid strategy for distinguishing between UTP and CTP. The overlapping regions of the product feedback inhibitory and substrate sites recognize a common feature in both compounds, the triphosphate moiety. To differentiate isosteric substrate and product pyrimidine rings, an additional pocket far from the expected kinase/ligase catalytic site, specifically recognizes the cytosine and ribose portions of the product inhibitor.</text>
</comment>
<comment type="similarity">
    <text evidence="1">Belongs to the CTP synthase family.</text>
</comment>